<feature type="chain" id="PRO_0000368473" description="ATP synthase subunit b">
    <location>
        <begin position="1"/>
        <end position="156"/>
    </location>
</feature>
<feature type="transmembrane region" description="Helical" evidence="1">
    <location>
        <begin position="11"/>
        <end position="31"/>
    </location>
</feature>
<keyword id="KW-0066">ATP synthesis</keyword>
<keyword id="KW-0997">Cell inner membrane</keyword>
<keyword id="KW-1003">Cell membrane</keyword>
<keyword id="KW-0138">CF(0)</keyword>
<keyword id="KW-0375">Hydrogen ion transport</keyword>
<keyword id="KW-0406">Ion transport</keyword>
<keyword id="KW-0472">Membrane</keyword>
<keyword id="KW-0812">Transmembrane</keyword>
<keyword id="KW-1133">Transmembrane helix</keyword>
<keyword id="KW-0813">Transport</keyword>
<proteinExistence type="inferred from homology"/>
<evidence type="ECO:0000255" key="1">
    <source>
        <dbReference type="HAMAP-Rule" id="MF_01398"/>
    </source>
</evidence>
<comment type="function">
    <text evidence="1">F(1)F(0) ATP synthase produces ATP from ADP in the presence of a proton or sodium gradient. F-type ATPases consist of two structural domains, F(1) containing the extramembraneous catalytic core and F(0) containing the membrane proton channel, linked together by a central stalk and a peripheral stalk. During catalysis, ATP synthesis in the catalytic domain of F(1) is coupled via a rotary mechanism of the central stalk subunits to proton translocation.</text>
</comment>
<comment type="function">
    <text evidence="1">Component of the F(0) channel, it forms part of the peripheral stalk, linking F(1) to F(0).</text>
</comment>
<comment type="subunit">
    <text evidence="1">F-type ATPases have 2 components, F(1) - the catalytic core - and F(0) - the membrane proton channel. F(1) has five subunits: alpha(3), beta(3), gamma(1), delta(1), epsilon(1). F(0) has three main subunits: a(1), b(2) and c(10-14). The alpha and beta chains form an alternating ring which encloses part of the gamma chain. F(1) is attached to F(0) by a central stalk formed by the gamma and epsilon chains, while a peripheral stalk is formed by the delta and b chains.</text>
</comment>
<comment type="subcellular location">
    <subcellularLocation>
        <location evidence="1">Cell inner membrane</location>
        <topology evidence="1">Single-pass membrane protein</topology>
    </subcellularLocation>
</comment>
<comment type="similarity">
    <text evidence="1">Belongs to the ATPase B chain family.</text>
</comment>
<name>ATPF_ECOLC</name>
<sequence>MNLNATILGQAIAFVLFVLFCMKYVWPPLMAAIEKRQKEIADGLASAERAHKDLDLAKASATDQLKKAKAEAQVIIEQANKRRSQILDEAKAEAEQERTKIVAQAQAEIEAERKRAREELRKQVAILAVAGAEKIIERSVDEAANSDIVDKLVAEL</sequence>
<reference key="1">
    <citation type="submission" date="2008-02" db="EMBL/GenBank/DDBJ databases">
        <title>Complete sequence of Escherichia coli C str. ATCC 8739.</title>
        <authorList>
            <person name="Copeland A."/>
            <person name="Lucas S."/>
            <person name="Lapidus A."/>
            <person name="Glavina del Rio T."/>
            <person name="Dalin E."/>
            <person name="Tice H."/>
            <person name="Bruce D."/>
            <person name="Goodwin L."/>
            <person name="Pitluck S."/>
            <person name="Kiss H."/>
            <person name="Brettin T."/>
            <person name="Detter J.C."/>
            <person name="Han C."/>
            <person name="Kuske C.R."/>
            <person name="Schmutz J."/>
            <person name="Larimer F."/>
            <person name="Land M."/>
            <person name="Hauser L."/>
            <person name="Kyrpides N."/>
            <person name="Mikhailova N."/>
            <person name="Ingram L."/>
            <person name="Richardson P."/>
        </authorList>
    </citation>
    <scope>NUCLEOTIDE SEQUENCE [LARGE SCALE GENOMIC DNA]</scope>
    <source>
        <strain>ATCC 8739 / DSM 1576 / NBRC 3972 / NCIMB 8545 / WDCM 00012 / Crooks</strain>
    </source>
</reference>
<dbReference type="EMBL" id="CP000946">
    <property type="protein sequence ID" value="ACA79854.1"/>
    <property type="molecule type" value="Genomic_DNA"/>
</dbReference>
<dbReference type="RefSeq" id="WP_001052219.1">
    <property type="nucleotide sequence ID" value="NZ_MTFT01000013.1"/>
</dbReference>
<dbReference type="SMR" id="B1IX02"/>
<dbReference type="GeneID" id="93778231"/>
<dbReference type="KEGG" id="ecl:EcolC_4258"/>
<dbReference type="HOGENOM" id="CLU_079215_4_5_6"/>
<dbReference type="GO" id="GO:0005886">
    <property type="term" value="C:plasma membrane"/>
    <property type="evidence" value="ECO:0007669"/>
    <property type="project" value="UniProtKB-SubCell"/>
</dbReference>
<dbReference type="GO" id="GO:0045259">
    <property type="term" value="C:proton-transporting ATP synthase complex"/>
    <property type="evidence" value="ECO:0007669"/>
    <property type="project" value="UniProtKB-KW"/>
</dbReference>
<dbReference type="GO" id="GO:0046933">
    <property type="term" value="F:proton-transporting ATP synthase activity, rotational mechanism"/>
    <property type="evidence" value="ECO:0007669"/>
    <property type="project" value="UniProtKB-UniRule"/>
</dbReference>
<dbReference type="GO" id="GO:0046961">
    <property type="term" value="F:proton-transporting ATPase activity, rotational mechanism"/>
    <property type="evidence" value="ECO:0007669"/>
    <property type="project" value="TreeGrafter"/>
</dbReference>
<dbReference type="CDD" id="cd06503">
    <property type="entry name" value="ATP-synt_Fo_b"/>
    <property type="match status" value="1"/>
</dbReference>
<dbReference type="FunFam" id="1.20.5.620:FF:000001">
    <property type="entry name" value="ATP synthase subunit b"/>
    <property type="match status" value="1"/>
</dbReference>
<dbReference type="Gene3D" id="1.20.5.620">
    <property type="entry name" value="F1F0 ATP synthase subunit B, membrane domain"/>
    <property type="match status" value="1"/>
</dbReference>
<dbReference type="HAMAP" id="MF_01398">
    <property type="entry name" value="ATP_synth_b_bprime"/>
    <property type="match status" value="1"/>
</dbReference>
<dbReference type="InterPro" id="IPR028987">
    <property type="entry name" value="ATP_synth_B-like_membr_sf"/>
</dbReference>
<dbReference type="InterPro" id="IPR002146">
    <property type="entry name" value="ATP_synth_b/b'su_bac/chlpt"/>
</dbReference>
<dbReference type="InterPro" id="IPR005864">
    <property type="entry name" value="ATP_synth_F0_bsu_bac"/>
</dbReference>
<dbReference type="InterPro" id="IPR050059">
    <property type="entry name" value="ATP_synthase_B_chain"/>
</dbReference>
<dbReference type="NCBIfam" id="TIGR01144">
    <property type="entry name" value="ATP_synt_b"/>
    <property type="match status" value="1"/>
</dbReference>
<dbReference type="NCBIfam" id="NF004411">
    <property type="entry name" value="PRK05759.1-2"/>
    <property type="match status" value="1"/>
</dbReference>
<dbReference type="NCBIfam" id="NF004413">
    <property type="entry name" value="PRK05759.1-4"/>
    <property type="match status" value="1"/>
</dbReference>
<dbReference type="PANTHER" id="PTHR33445:SF1">
    <property type="entry name" value="ATP SYNTHASE SUBUNIT B"/>
    <property type="match status" value="1"/>
</dbReference>
<dbReference type="PANTHER" id="PTHR33445">
    <property type="entry name" value="ATP SYNTHASE SUBUNIT B', CHLOROPLASTIC"/>
    <property type="match status" value="1"/>
</dbReference>
<dbReference type="Pfam" id="PF00430">
    <property type="entry name" value="ATP-synt_B"/>
    <property type="match status" value="1"/>
</dbReference>
<dbReference type="SUPFAM" id="SSF81573">
    <property type="entry name" value="F1F0 ATP synthase subunit B, membrane domain"/>
    <property type="match status" value="1"/>
</dbReference>
<gene>
    <name evidence="1" type="primary">atpF</name>
    <name type="ordered locus">EcolC_4258</name>
</gene>
<accession>B1IX02</accession>
<protein>
    <recommendedName>
        <fullName evidence="1">ATP synthase subunit b</fullName>
    </recommendedName>
    <alternativeName>
        <fullName evidence="1">ATP synthase F(0) sector subunit b</fullName>
    </alternativeName>
    <alternativeName>
        <fullName evidence="1">ATPase subunit I</fullName>
    </alternativeName>
    <alternativeName>
        <fullName evidence="1">F-type ATPase subunit b</fullName>
        <shortName evidence="1">F-ATPase subunit b</shortName>
    </alternativeName>
</protein>
<organism>
    <name type="scientific">Escherichia coli (strain ATCC 8739 / DSM 1576 / NBRC 3972 / NCIMB 8545 / WDCM 00012 / Crooks)</name>
    <dbReference type="NCBI Taxonomy" id="481805"/>
    <lineage>
        <taxon>Bacteria</taxon>
        <taxon>Pseudomonadati</taxon>
        <taxon>Pseudomonadota</taxon>
        <taxon>Gammaproteobacteria</taxon>
        <taxon>Enterobacterales</taxon>
        <taxon>Enterobacteriaceae</taxon>
        <taxon>Escherichia</taxon>
    </lineage>
</organism>